<proteinExistence type="inferred from homology"/>
<comment type="function">
    <text evidence="1">Catalyzes the formation of phosphatidylethanolamine (PtdEtn) from phosphatidylserine (PtdSer).</text>
</comment>
<comment type="catalytic activity">
    <reaction evidence="1">
        <text>a 1,2-diacyl-sn-glycero-3-phospho-L-serine + H(+) = a 1,2-diacyl-sn-glycero-3-phosphoethanolamine + CO2</text>
        <dbReference type="Rhea" id="RHEA:20828"/>
        <dbReference type="ChEBI" id="CHEBI:15378"/>
        <dbReference type="ChEBI" id="CHEBI:16526"/>
        <dbReference type="ChEBI" id="CHEBI:57262"/>
        <dbReference type="ChEBI" id="CHEBI:64612"/>
        <dbReference type="EC" id="4.1.1.65"/>
    </reaction>
</comment>
<comment type="cofactor">
    <cofactor evidence="1">
        <name>pyruvate</name>
        <dbReference type="ChEBI" id="CHEBI:15361"/>
    </cofactor>
    <text evidence="1">Binds 1 pyruvoyl group covalently per subunit.</text>
</comment>
<comment type="pathway">
    <text evidence="1">Phospholipid metabolism; phosphatidylethanolamine biosynthesis; phosphatidylethanolamine from CDP-diacylglycerol: step 2/2.</text>
</comment>
<comment type="subunit">
    <text evidence="1">Heterodimer of a large membrane-associated beta subunit and a small pyruvoyl-containing alpha subunit.</text>
</comment>
<comment type="subcellular location">
    <subcellularLocation>
        <location evidence="1">Cell membrane</location>
        <topology evidence="1">Peripheral membrane protein</topology>
    </subcellularLocation>
</comment>
<comment type="PTM">
    <text evidence="1">Is synthesized initially as an inactive proenzyme. Formation of the active enzyme involves a self-maturation process in which the active site pyruvoyl group is generated from an internal serine residue via an autocatalytic post-translational modification. Two non-identical subunits are generated from the proenzyme in this reaction, and the pyruvate is formed at the N-terminus of the alpha chain, which is derived from the carboxyl end of the proenzyme. The autoendoproteolytic cleavage occurs by a canonical serine protease mechanism, in which the side chain hydroxyl group of the serine supplies its oxygen atom to form the C-terminus of the beta chain, while the remainder of the serine residue undergoes an oxidative deamination to produce ammonia and the pyruvoyl prosthetic group on the alpha chain. During this reaction, the Ser that is part of the protease active site of the proenzyme becomes the pyruvoyl prosthetic group, which constitutes an essential element of the active site of the mature decarboxylase.</text>
</comment>
<comment type="similarity">
    <text evidence="1">Belongs to the phosphatidylserine decarboxylase family. PSD-B subfamily. Prokaryotic type I sub-subfamily.</text>
</comment>
<protein>
    <recommendedName>
        <fullName evidence="1">Phosphatidylserine decarboxylase proenzyme</fullName>
        <ecNumber evidence="1">4.1.1.65</ecNumber>
    </recommendedName>
    <component>
        <recommendedName>
            <fullName evidence="1">Phosphatidylserine decarboxylase alpha chain</fullName>
        </recommendedName>
    </component>
    <component>
        <recommendedName>
            <fullName evidence="1">Phosphatidylserine decarboxylase beta chain</fullName>
        </recommendedName>
    </component>
</protein>
<feature type="chain" id="PRO_1000082886" description="Phosphatidylserine decarboxylase beta chain" evidence="1">
    <location>
        <begin position="1"/>
        <end position="243"/>
    </location>
</feature>
<feature type="chain" id="PRO_1000082887" description="Phosphatidylserine decarboxylase alpha chain" evidence="1">
    <location>
        <begin position="244"/>
        <end position="282"/>
    </location>
</feature>
<feature type="active site" description="Charge relay system; for autoendoproteolytic cleavage activity" evidence="1">
    <location>
        <position position="85"/>
    </location>
</feature>
<feature type="active site" description="Charge relay system; for autoendoproteolytic cleavage activity" evidence="1">
    <location>
        <position position="142"/>
    </location>
</feature>
<feature type="active site" description="Charge relay system; for autoendoproteolytic cleavage activity" evidence="1">
    <location>
        <position position="244"/>
    </location>
</feature>
<feature type="active site" description="Schiff-base intermediate with substrate; via pyruvic acid; for decarboxylase activity" evidence="1">
    <location>
        <position position="244"/>
    </location>
</feature>
<feature type="site" description="Cleavage (non-hydrolytic); by autocatalysis" evidence="1">
    <location>
        <begin position="243"/>
        <end position="244"/>
    </location>
</feature>
<feature type="modified residue" description="Pyruvic acid (Ser); by autocatalysis" evidence="1">
    <location>
        <position position="244"/>
    </location>
</feature>
<gene>
    <name evidence="1" type="primary">psd</name>
    <name type="ordered locus">CBUD_0055</name>
</gene>
<name>PSD_COXBN</name>
<accession>A9KEZ8</accession>
<reference key="1">
    <citation type="journal article" date="2009" name="Infect. Immun.">
        <title>Comparative genomics reveal extensive transposon-mediated genomic plasticity and diversity among potential effector proteins within the genus Coxiella.</title>
        <authorList>
            <person name="Beare P.A."/>
            <person name="Unsworth N."/>
            <person name="Andoh M."/>
            <person name="Voth D.E."/>
            <person name="Omsland A."/>
            <person name="Gilk S.D."/>
            <person name="Williams K.P."/>
            <person name="Sobral B.W."/>
            <person name="Kupko J.J. III"/>
            <person name="Porcella S.F."/>
            <person name="Samuel J.E."/>
            <person name="Heinzen R.A."/>
        </authorList>
    </citation>
    <scope>NUCLEOTIDE SEQUENCE [LARGE SCALE GENOMIC DNA]</scope>
    <source>
        <strain>Dugway 5J108-111</strain>
    </source>
</reference>
<sequence>MTKLHKYLPQRTLSKIVGWLATREWGLLTQWAIRLFIRHYGINMQEAQYPDIGHYPSFNAFFTRYLKRELRPVVEEPLAIASPVDGIISEMGQIKGENLIQAKNHHYTITALLGEDPSRASQFLDGDFFTAYLAPKNYHRIHMPLDGRLIEMIHIPGKLFSVNPASVQTVPRLFARNERAVCLFETENGLMAVILVGAMLVGSINTVWHGTVVPTAEGIAVHNYREKNIKFKRGEEIGHFKMGSTVILLFPKNTIQWNPNCQPKGTICYGENIGTVSLIEVA</sequence>
<organism>
    <name type="scientific">Coxiella burnetii (strain Dugway 5J108-111)</name>
    <dbReference type="NCBI Taxonomy" id="434922"/>
    <lineage>
        <taxon>Bacteria</taxon>
        <taxon>Pseudomonadati</taxon>
        <taxon>Pseudomonadota</taxon>
        <taxon>Gammaproteobacteria</taxon>
        <taxon>Legionellales</taxon>
        <taxon>Coxiellaceae</taxon>
        <taxon>Coxiella</taxon>
    </lineage>
</organism>
<dbReference type="EC" id="4.1.1.65" evidence="1"/>
<dbReference type="EMBL" id="CP000733">
    <property type="protein sequence ID" value="ABS76838.1"/>
    <property type="molecule type" value="Genomic_DNA"/>
</dbReference>
<dbReference type="RefSeq" id="WP_011996381.1">
    <property type="nucleotide sequence ID" value="NC_009727.1"/>
</dbReference>
<dbReference type="SMR" id="A9KEZ8"/>
<dbReference type="KEGG" id="cbd:CBUD_0055"/>
<dbReference type="HOGENOM" id="CLU_029061_4_1_6"/>
<dbReference type="UniPathway" id="UPA00558">
    <property type="reaction ID" value="UER00616"/>
</dbReference>
<dbReference type="Proteomes" id="UP000008555">
    <property type="component" value="Chromosome"/>
</dbReference>
<dbReference type="GO" id="GO:0005886">
    <property type="term" value="C:plasma membrane"/>
    <property type="evidence" value="ECO:0007669"/>
    <property type="project" value="UniProtKB-SubCell"/>
</dbReference>
<dbReference type="GO" id="GO:0004609">
    <property type="term" value="F:phosphatidylserine decarboxylase activity"/>
    <property type="evidence" value="ECO:0007669"/>
    <property type="project" value="UniProtKB-UniRule"/>
</dbReference>
<dbReference type="GO" id="GO:0006646">
    <property type="term" value="P:phosphatidylethanolamine biosynthetic process"/>
    <property type="evidence" value="ECO:0007669"/>
    <property type="project" value="UniProtKB-UniRule"/>
</dbReference>
<dbReference type="HAMAP" id="MF_00662">
    <property type="entry name" value="PS_decarb_PSD_B_type1"/>
    <property type="match status" value="1"/>
</dbReference>
<dbReference type="InterPro" id="IPR003817">
    <property type="entry name" value="PS_Dcarbxylase"/>
</dbReference>
<dbReference type="InterPro" id="IPR033177">
    <property type="entry name" value="PSD-B"/>
</dbReference>
<dbReference type="InterPro" id="IPR033178">
    <property type="entry name" value="PSD_type1_pro"/>
</dbReference>
<dbReference type="NCBIfam" id="TIGR00163">
    <property type="entry name" value="PS_decarb"/>
    <property type="match status" value="1"/>
</dbReference>
<dbReference type="PANTHER" id="PTHR10067">
    <property type="entry name" value="PHOSPHATIDYLSERINE DECARBOXYLASE"/>
    <property type="match status" value="1"/>
</dbReference>
<dbReference type="PANTHER" id="PTHR10067:SF6">
    <property type="entry name" value="PHOSPHATIDYLSERINE DECARBOXYLASE PROENZYME, MITOCHONDRIAL"/>
    <property type="match status" value="1"/>
</dbReference>
<dbReference type="Pfam" id="PF02666">
    <property type="entry name" value="PS_Dcarbxylase"/>
    <property type="match status" value="1"/>
</dbReference>
<evidence type="ECO:0000255" key="1">
    <source>
        <dbReference type="HAMAP-Rule" id="MF_00662"/>
    </source>
</evidence>
<keyword id="KW-1003">Cell membrane</keyword>
<keyword id="KW-0210">Decarboxylase</keyword>
<keyword id="KW-0444">Lipid biosynthesis</keyword>
<keyword id="KW-0443">Lipid metabolism</keyword>
<keyword id="KW-0456">Lyase</keyword>
<keyword id="KW-0472">Membrane</keyword>
<keyword id="KW-0594">Phospholipid biosynthesis</keyword>
<keyword id="KW-1208">Phospholipid metabolism</keyword>
<keyword id="KW-0670">Pyruvate</keyword>
<keyword id="KW-0865">Zymogen</keyword>